<sequence>MAINSSGTKVLSFVRSVWQDFVNTNGFDAHVVSDIQIISAVPGFVECSLKLQKHHLNRMGNLHGGCIAALTDLGGSLALASRGLFISGVSIDMNQTFLQSGGTLGSSILLHAKCDRLGSNIAFTSVDFLTSSNEVFAKGRHTKFVRNALGDPRNCLDLAED</sequence>
<protein>
    <recommendedName>
        <fullName>Putative esterase C31F10.02</fullName>
        <ecNumber>3.1.2.-</ecNumber>
    </recommendedName>
</protein>
<keyword id="KW-0378">Hydrolase</keyword>
<keyword id="KW-1185">Reference proteome</keyword>
<evidence type="ECO:0000305" key="1"/>
<gene>
    <name type="ORF">SPBC31F10.02</name>
</gene>
<organism>
    <name type="scientific">Schizosaccharomyces pombe (strain 972 / ATCC 24843)</name>
    <name type="common">Fission yeast</name>
    <dbReference type="NCBI Taxonomy" id="284812"/>
    <lineage>
        <taxon>Eukaryota</taxon>
        <taxon>Fungi</taxon>
        <taxon>Dikarya</taxon>
        <taxon>Ascomycota</taxon>
        <taxon>Taphrinomycotina</taxon>
        <taxon>Schizosaccharomycetes</taxon>
        <taxon>Schizosaccharomycetales</taxon>
        <taxon>Schizosaccharomycetaceae</taxon>
        <taxon>Schizosaccharomyces</taxon>
    </lineage>
</organism>
<dbReference type="EC" id="3.1.2.-"/>
<dbReference type="EMBL" id="CU329671">
    <property type="protein sequence ID" value="CAB10079.1"/>
    <property type="molecule type" value="Genomic_DNA"/>
</dbReference>
<dbReference type="PIR" id="T40205">
    <property type="entry name" value="T40205"/>
</dbReference>
<dbReference type="SMR" id="P87304"/>
<dbReference type="BioGRID" id="276903">
    <property type="interactions" value="24"/>
</dbReference>
<dbReference type="FunCoup" id="P87304">
    <property type="interactions" value="67"/>
</dbReference>
<dbReference type="STRING" id="284812.P87304"/>
<dbReference type="PaxDb" id="4896-SPBC31F10.02.1"/>
<dbReference type="EnsemblFungi" id="SPBC31F10.02.1">
    <property type="protein sequence ID" value="SPBC31F10.02.1:pep"/>
    <property type="gene ID" value="SPBC31F10.02"/>
</dbReference>
<dbReference type="KEGG" id="spo:2540374"/>
<dbReference type="PomBase" id="SPBC31F10.02"/>
<dbReference type="VEuPathDB" id="FungiDB:SPBC31F10.02"/>
<dbReference type="eggNOG" id="KOG3328">
    <property type="taxonomic scope" value="Eukaryota"/>
</dbReference>
<dbReference type="HOGENOM" id="CLU_089876_12_1_1"/>
<dbReference type="InParanoid" id="P87304"/>
<dbReference type="OMA" id="KQIMRAM"/>
<dbReference type="PhylomeDB" id="P87304"/>
<dbReference type="Reactome" id="R-SPO-77289">
    <property type="pathway name" value="Mitochondrial Fatty Acid Beta-Oxidation"/>
</dbReference>
<dbReference type="PRO" id="PR:P87304"/>
<dbReference type="Proteomes" id="UP000002485">
    <property type="component" value="Chromosome II"/>
</dbReference>
<dbReference type="GO" id="GO:0005829">
    <property type="term" value="C:cytosol"/>
    <property type="evidence" value="ECO:0007005"/>
    <property type="project" value="PomBase"/>
</dbReference>
<dbReference type="GO" id="GO:0005634">
    <property type="term" value="C:nucleus"/>
    <property type="evidence" value="ECO:0007005"/>
    <property type="project" value="PomBase"/>
</dbReference>
<dbReference type="GO" id="GO:0047617">
    <property type="term" value="F:fatty acyl-CoA hydrolase activity"/>
    <property type="evidence" value="ECO:0000318"/>
    <property type="project" value="GO_Central"/>
</dbReference>
<dbReference type="GO" id="GO:0006637">
    <property type="term" value="P:acyl-CoA metabolic process"/>
    <property type="evidence" value="ECO:0000305"/>
    <property type="project" value="PomBase"/>
</dbReference>
<dbReference type="GO" id="GO:0006633">
    <property type="term" value="P:fatty acid biosynthetic process"/>
    <property type="evidence" value="ECO:0000305"/>
    <property type="project" value="PomBase"/>
</dbReference>
<dbReference type="CDD" id="cd03443">
    <property type="entry name" value="PaaI_thioesterase"/>
    <property type="match status" value="1"/>
</dbReference>
<dbReference type="FunFam" id="3.10.129.10:FF:000033">
    <property type="entry name" value="acyl-coenzyme A thioesterase 13"/>
    <property type="match status" value="1"/>
</dbReference>
<dbReference type="Gene3D" id="3.10.129.10">
    <property type="entry name" value="Hotdog Thioesterase"/>
    <property type="match status" value="1"/>
</dbReference>
<dbReference type="InterPro" id="IPR039298">
    <property type="entry name" value="ACOT13"/>
</dbReference>
<dbReference type="InterPro" id="IPR029069">
    <property type="entry name" value="HotDog_dom_sf"/>
</dbReference>
<dbReference type="InterPro" id="IPR006683">
    <property type="entry name" value="Thioestr_dom"/>
</dbReference>
<dbReference type="PANTHER" id="PTHR21660:SF1">
    <property type="entry name" value="ACYL-COENZYME A THIOESTERASE 13"/>
    <property type="match status" value="1"/>
</dbReference>
<dbReference type="PANTHER" id="PTHR21660">
    <property type="entry name" value="THIOESTERASE SUPERFAMILY MEMBER-RELATED"/>
    <property type="match status" value="1"/>
</dbReference>
<dbReference type="Pfam" id="PF03061">
    <property type="entry name" value="4HBT"/>
    <property type="match status" value="1"/>
</dbReference>
<dbReference type="SUPFAM" id="SSF54637">
    <property type="entry name" value="Thioesterase/thiol ester dehydrase-isomerase"/>
    <property type="match status" value="1"/>
</dbReference>
<accession>P87304</accession>
<name>YB22_SCHPO</name>
<reference key="1">
    <citation type="journal article" date="2002" name="Nature">
        <title>The genome sequence of Schizosaccharomyces pombe.</title>
        <authorList>
            <person name="Wood V."/>
            <person name="Gwilliam R."/>
            <person name="Rajandream M.A."/>
            <person name="Lyne M.H."/>
            <person name="Lyne R."/>
            <person name="Stewart A."/>
            <person name="Sgouros J.G."/>
            <person name="Peat N."/>
            <person name="Hayles J."/>
            <person name="Baker S.G."/>
            <person name="Basham D."/>
            <person name="Bowman S."/>
            <person name="Brooks K."/>
            <person name="Brown D."/>
            <person name="Brown S."/>
            <person name="Chillingworth T."/>
            <person name="Churcher C.M."/>
            <person name="Collins M."/>
            <person name="Connor R."/>
            <person name="Cronin A."/>
            <person name="Davis P."/>
            <person name="Feltwell T."/>
            <person name="Fraser A."/>
            <person name="Gentles S."/>
            <person name="Goble A."/>
            <person name="Hamlin N."/>
            <person name="Harris D.E."/>
            <person name="Hidalgo J."/>
            <person name="Hodgson G."/>
            <person name="Holroyd S."/>
            <person name="Hornsby T."/>
            <person name="Howarth S."/>
            <person name="Huckle E.J."/>
            <person name="Hunt S."/>
            <person name="Jagels K."/>
            <person name="James K.D."/>
            <person name="Jones L."/>
            <person name="Jones M."/>
            <person name="Leather S."/>
            <person name="McDonald S."/>
            <person name="McLean J."/>
            <person name="Mooney P."/>
            <person name="Moule S."/>
            <person name="Mungall K.L."/>
            <person name="Murphy L.D."/>
            <person name="Niblett D."/>
            <person name="Odell C."/>
            <person name="Oliver K."/>
            <person name="O'Neil S."/>
            <person name="Pearson D."/>
            <person name="Quail M.A."/>
            <person name="Rabbinowitsch E."/>
            <person name="Rutherford K.M."/>
            <person name="Rutter S."/>
            <person name="Saunders D."/>
            <person name="Seeger K."/>
            <person name="Sharp S."/>
            <person name="Skelton J."/>
            <person name="Simmonds M.N."/>
            <person name="Squares R."/>
            <person name="Squares S."/>
            <person name="Stevens K."/>
            <person name="Taylor K."/>
            <person name="Taylor R.G."/>
            <person name="Tivey A."/>
            <person name="Walsh S.V."/>
            <person name="Warren T."/>
            <person name="Whitehead S."/>
            <person name="Woodward J.R."/>
            <person name="Volckaert G."/>
            <person name="Aert R."/>
            <person name="Robben J."/>
            <person name="Grymonprez B."/>
            <person name="Weltjens I."/>
            <person name="Vanstreels E."/>
            <person name="Rieger M."/>
            <person name="Schaefer M."/>
            <person name="Mueller-Auer S."/>
            <person name="Gabel C."/>
            <person name="Fuchs M."/>
            <person name="Duesterhoeft A."/>
            <person name="Fritzc C."/>
            <person name="Holzer E."/>
            <person name="Moestl D."/>
            <person name="Hilbert H."/>
            <person name="Borzym K."/>
            <person name="Langer I."/>
            <person name="Beck A."/>
            <person name="Lehrach H."/>
            <person name="Reinhardt R."/>
            <person name="Pohl T.M."/>
            <person name="Eger P."/>
            <person name="Zimmermann W."/>
            <person name="Wedler H."/>
            <person name="Wambutt R."/>
            <person name="Purnelle B."/>
            <person name="Goffeau A."/>
            <person name="Cadieu E."/>
            <person name="Dreano S."/>
            <person name="Gloux S."/>
            <person name="Lelaure V."/>
            <person name="Mottier S."/>
            <person name="Galibert F."/>
            <person name="Aves S.J."/>
            <person name="Xiang Z."/>
            <person name="Hunt C."/>
            <person name="Moore K."/>
            <person name="Hurst S.M."/>
            <person name="Lucas M."/>
            <person name="Rochet M."/>
            <person name="Gaillardin C."/>
            <person name="Tallada V.A."/>
            <person name="Garzon A."/>
            <person name="Thode G."/>
            <person name="Daga R.R."/>
            <person name="Cruzado L."/>
            <person name="Jimenez J."/>
            <person name="Sanchez M."/>
            <person name="del Rey F."/>
            <person name="Benito J."/>
            <person name="Dominguez A."/>
            <person name="Revuelta J.L."/>
            <person name="Moreno S."/>
            <person name="Armstrong J."/>
            <person name="Forsburg S.L."/>
            <person name="Cerutti L."/>
            <person name="Lowe T."/>
            <person name="McCombie W.R."/>
            <person name="Paulsen I."/>
            <person name="Potashkin J."/>
            <person name="Shpakovski G.V."/>
            <person name="Ussery D."/>
            <person name="Barrell B.G."/>
            <person name="Nurse P."/>
        </authorList>
    </citation>
    <scope>NUCLEOTIDE SEQUENCE [LARGE SCALE GENOMIC DNA]</scope>
    <source>
        <strain>972 / ATCC 24843</strain>
    </source>
</reference>
<feature type="chain" id="PRO_0000156700" description="Putative esterase C31F10.02">
    <location>
        <begin position="1"/>
        <end position="161"/>
    </location>
</feature>
<comment type="similarity">
    <text evidence="1">Belongs to the thioesterase PaaI family.</text>
</comment>
<proteinExistence type="inferred from homology"/>